<sequence length="104" mass="11189">MKVHKGDMVLVISGPDKGAKGQVIAAFPKTEKVLVEGVNRIKKHVANSAPERGAESGGIVTQEAPIHVSNVMVIDSDGNPTRVGYRFDENGKKVRVSRRNGKDI</sequence>
<proteinExistence type="inferred from homology"/>
<comment type="function">
    <text evidence="1">One of two assembly initiator proteins, it binds directly to the 5'-end of the 23S rRNA, where it nucleates assembly of the 50S subunit.</text>
</comment>
<comment type="function">
    <text evidence="1">One of the proteins that surrounds the polypeptide exit tunnel on the outside of the subunit.</text>
</comment>
<comment type="subunit">
    <text evidence="1">Part of the 50S ribosomal subunit.</text>
</comment>
<comment type="similarity">
    <text evidence="1">Belongs to the universal ribosomal protein uL24 family.</text>
</comment>
<evidence type="ECO:0000255" key="1">
    <source>
        <dbReference type="HAMAP-Rule" id="MF_01326"/>
    </source>
</evidence>
<evidence type="ECO:0000256" key="2">
    <source>
        <dbReference type="SAM" id="MobiDB-lite"/>
    </source>
</evidence>
<evidence type="ECO:0000305" key="3"/>
<name>RL24_CORGL</name>
<protein>
    <recommendedName>
        <fullName evidence="1">Large ribosomal subunit protein uL24</fullName>
    </recommendedName>
    <alternativeName>
        <fullName evidence="3">50S ribosomal protein L24</fullName>
    </alternativeName>
</protein>
<gene>
    <name evidence="1" type="primary">rplX</name>
    <name type="ordered locus">Cgl0522</name>
    <name type="ordered locus">cg0609</name>
</gene>
<reference key="1">
    <citation type="journal article" date="2003" name="Appl. Microbiol. Biotechnol.">
        <title>The Corynebacterium glutamicum genome: features and impacts on biotechnological processes.</title>
        <authorList>
            <person name="Ikeda M."/>
            <person name="Nakagawa S."/>
        </authorList>
    </citation>
    <scope>NUCLEOTIDE SEQUENCE [LARGE SCALE GENOMIC DNA]</scope>
    <source>
        <strain>ATCC 13032 / DSM 20300 / JCM 1318 / BCRC 11384 / CCUG 27702 / LMG 3730 / NBRC 12168 / NCIMB 10025 / NRRL B-2784 / 534</strain>
    </source>
</reference>
<reference key="2">
    <citation type="journal article" date="2003" name="J. Biotechnol.">
        <title>The complete Corynebacterium glutamicum ATCC 13032 genome sequence and its impact on the production of L-aspartate-derived amino acids and vitamins.</title>
        <authorList>
            <person name="Kalinowski J."/>
            <person name="Bathe B."/>
            <person name="Bartels D."/>
            <person name="Bischoff N."/>
            <person name="Bott M."/>
            <person name="Burkovski A."/>
            <person name="Dusch N."/>
            <person name="Eggeling L."/>
            <person name="Eikmanns B.J."/>
            <person name="Gaigalat L."/>
            <person name="Goesmann A."/>
            <person name="Hartmann M."/>
            <person name="Huthmacher K."/>
            <person name="Kraemer R."/>
            <person name="Linke B."/>
            <person name="McHardy A.C."/>
            <person name="Meyer F."/>
            <person name="Moeckel B."/>
            <person name="Pfefferle W."/>
            <person name="Puehler A."/>
            <person name="Rey D.A."/>
            <person name="Rueckert C."/>
            <person name="Rupp O."/>
            <person name="Sahm H."/>
            <person name="Wendisch V.F."/>
            <person name="Wiegraebe I."/>
            <person name="Tauch A."/>
        </authorList>
    </citation>
    <scope>NUCLEOTIDE SEQUENCE [LARGE SCALE GENOMIC DNA]</scope>
    <source>
        <strain>ATCC 13032 / DSM 20300 / JCM 1318 / BCRC 11384 / CCUG 27702 / LMG 3730 / NBRC 12168 / NCIMB 10025 / NRRL B-2784 / 534</strain>
    </source>
</reference>
<accession>Q8NSZ3</accession>
<feature type="chain" id="PRO_0000130651" description="Large ribosomal subunit protein uL24">
    <location>
        <begin position="1"/>
        <end position="104"/>
    </location>
</feature>
<feature type="region of interest" description="Disordered" evidence="2">
    <location>
        <begin position="82"/>
        <end position="104"/>
    </location>
</feature>
<feature type="compositionally biased region" description="Basic residues" evidence="2">
    <location>
        <begin position="93"/>
        <end position="104"/>
    </location>
</feature>
<organism>
    <name type="scientific">Corynebacterium glutamicum (strain ATCC 13032 / DSM 20300 / JCM 1318 / BCRC 11384 / CCUG 27702 / LMG 3730 / NBRC 12168 / NCIMB 10025 / NRRL B-2784 / 534)</name>
    <dbReference type="NCBI Taxonomy" id="196627"/>
    <lineage>
        <taxon>Bacteria</taxon>
        <taxon>Bacillati</taxon>
        <taxon>Actinomycetota</taxon>
        <taxon>Actinomycetes</taxon>
        <taxon>Mycobacteriales</taxon>
        <taxon>Corynebacteriaceae</taxon>
        <taxon>Corynebacterium</taxon>
    </lineage>
</organism>
<keyword id="KW-1185">Reference proteome</keyword>
<keyword id="KW-0687">Ribonucleoprotein</keyword>
<keyword id="KW-0689">Ribosomal protein</keyword>
<keyword id="KW-0694">RNA-binding</keyword>
<keyword id="KW-0699">rRNA-binding</keyword>
<dbReference type="EMBL" id="BA000036">
    <property type="protein sequence ID" value="BAB97915.1"/>
    <property type="molecule type" value="Genomic_DNA"/>
</dbReference>
<dbReference type="EMBL" id="BX927149">
    <property type="protein sequence ID" value="CAF19230.1"/>
    <property type="molecule type" value="Genomic_DNA"/>
</dbReference>
<dbReference type="RefSeq" id="NP_599761.1">
    <property type="nucleotide sequence ID" value="NC_003450.3"/>
</dbReference>
<dbReference type="RefSeq" id="WP_003854314.1">
    <property type="nucleotide sequence ID" value="NC_006958.1"/>
</dbReference>
<dbReference type="SMR" id="Q8NSZ3"/>
<dbReference type="STRING" id="196627.cg0609"/>
<dbReference type="GeneID" id="1021520"/>
<dbReference type="KEGG" id="cgb:cg0609"/>
<dbReference type="KEGG" id="cgl:Cgl0522"/>
<dbReference type="PATRIC" id="fig|196627.13.peg.516"/>
<dbReference type="eggNOG" id="COG0198">
    <property type="taxonomic scope" value="Bacteria"/>
</dbReference>
<dbReference type="HOGENOM" id="CLU_093315_2_2_11"/>
<dbReference type="OrthoDB" id="9807419at2"/>
<dbReference type="BioCyc" id="CORYNE:G18NG-10084-MONOMER"/>
<dbReference type="Proteomes" id="UP000000582">
    <property type="component" value="Chromosome"/>
</dbReference>
<dbReference type="Proteomes" id="UP000001009">
    <property type="component" value="Chromosome"/>
</dbReference>
<dbReference type="GO" id="GO:1990904">
    <property type="term" value="C:ribonucleoprotein complex"/>
    <property type="evidence" value="ECO:0007669"/>
    <property type="project" value="UniProtKB-KW"/>
</dbReference>
<dbReference type="GO" id="GO:0005840">
    <property type="term" value="C:ribosome"/>
    <property type="evidence" value="ECO:0007669"/>
    <property type="project" value="UniProtKB-KW"/>
</dbReference>
<dbReference type="GO" id="GO:0019843">
    <property type="term" value="F:rRNA binding"/>
    <property type="evidence" value="ECO:0007669"/>
    <property type="project" value="UniProtKB-UniRule"/>
</dbReference>
<dbReference type="GO" id="GO:0003735">
    <property type="term" value="F:structural constituent of ribosome"/>
    <property type="evidence" value="ECO:0007669"/>
    <property type="project" value="InterPro"/>
</dbReference>
<dbReference type="GO" id="GO:0006412">
    <property type="term" value="P:translation"/>
    <property type="evidence" value="ECO:0007669"/>
    <property type="project" value="UniProtKB-UniRule"/>
</dbReference>
<dbReference type="CDD" id="cd06089">
    <property type="entry name" value="KOW_RPL26"/>
    <property type="match status" value="1"/>
</dbReference>
<dbReference type="FunFam" id="2.30.30.30:FF:000004">
    <property type="entry name" value="50S ribosomal protein L24"/>
    <property type="match status" value="1"/>
</dbReference>
<dbReference type="Gene3D" id="2.30.30.30">
    <property type="match status" value="1"/>
</dbReference>
<dbReference type="HAMAP" id="MF_01326_B">
    <property type="entry name" value="Ribosomal_uL24_B"/>
    <property type="match status" value="1"/>
</dbReference>
<dbReference type="InterPro" id="IPR005824">
    <property type="entry name" value="KOW"/>
</dbReference>
<dbReference type="InterPro" id="IPR014722">
    <property type="entry name" value="Rib_uL2_dom2"/>
</dbReference>
<dbReference type="InterPro" id="IPR003256">
    <property type="entry name" value="Ribosomal_uL24"/>
</dbReference>
<dbReference type="InterPro" id="IPR005825">
    <property type="entry name" value="Ribosomal_uL24_CS"/>
</dbReference>
<dbReference type="InterPro" id="IPR041988">
    <property type="entry name" value="Ribosomal_uL24_KOW"/>
</dbReference>
<dbReference type="InterPro" id="IPR008991">
    <property type="entry name" value="Translation_prot_SH3-like_sf"/>
</dbReference>
<dbReference type="NCBIfam" id="TIGR01079">
    <property type="entry name" value="rplX_bact"/>
    <property type="match status" value="1"/>
</dbReference>
<dbReference type="PANTHER" id="PTHR12903">
    <property type="entry name" value="MITOCHONDRIAL RIBOSOMAL PROTEIN L24"/>
    <property type="match status" value="1"/>
</dbReference>
<dbReference type="Pfam" id="PF00467">
    <property type="entry name" value="KOW"/>
    <property type="match status" value="1"/>
</dbReference>
<dbReference type="Pfam" id="PF17136">
    <property type="entry name" value="ribosomal_L24"/>
    <property type="match status" value="1"/>
</dbReference>
<dbReference type="SMART" id="SM00739">
    <property type="entry name" value="KOW"/>
    <property type="match status" value="1"/>
</dbReference>
<dbReference type="SUPFAM" id="SSF50104">
    <property type="entry name" value="Translation proteins SH3-like domain"/>
    <property type="match status" value="1"/>
</dbReference>
<dbReference type="PROSITE" id="PS01108">
    <property type="entry name" value="RIBOSOMAL_L24"/>
    <property type="match status" value="1"/>
</dbReference>